<dbReference type="EC" id="3.6.1.-"/>
<dbReference type="EC" id="3.6.1.77" evidence="3 5"/>
<dbReference type="EMBL" id="AF338424">
    <property type="protein sequence ID" value="AAK07483.1"/>
    <property type="molecule type" value="mRNA"/>
</dbReference>
<dbReference type="EMBL" id="AK004924">
    <property type="protein sequence ID" value="BAB23675.1"/>
    <property type="molecule type" value="mRNA"/>
</dbReference>
<dbReference type="EMBL" id="AK011172">
    <property type="protein sequence ID" value="BAB27446.1"/>
    <property type="molecule type" value="mRNA"/>
</dbReference>
<dbReference type="EMBL" id="AK088191">
    <property type="protein sequence ID" value="BAC40199.1"/>
    <property type="molecule type" value="mRNA"/>
</dbReference>
<dbReference type="EMBL" id="BC033046">
    <property type="protein sequence ID" value="AAH33046.1"/>
    <property type="status" value="ALT_INIT"/>
    <property type="molecule type" value="mRNA"/>
</dbReference>
<dbReference type="EMBL" id="BC069843">
    <property type="protein sequence ID" value="AAH69843.1"/>
    <property type="molecule type" value="mRNA"/>
</dbReference>
<dbReference type="CCDS" id="CCDS22687.1">
    <molecule id="Q99P30-1"/>
</dbReference>
<dbReference type="CCDS" id="CCDS22688.2">
    <molecule id="Q99P30-3"/>
</dbReference>
<dbReference type="CCDS" id="CCDS80934.1">
    <molecule id="Q99P30-5"/>
</dbReference>
<dbReference type="CCDS" id="CCDS80935.1">
    <molecule id="Q99P30-2"/>
</dbReference>
<dbReference type="RefSeq" id="NP_001277109.1">
    <property type="nucleotide sequence ID" value="NM_001290180.1"/>
</dbReference>
<dbReference type="RefSeq" id="NP_001277110.1">
    <molecule id="Q99P30-2"/>
    <property type="nucleotide sequence ID" value="NM_001290181.1"/>
</dbReference>
<dbReference type="RefSeq" id="NP_001277111.1">
    <molecule id="Q99P30-5"/>
    <property type="nucleotide sequence ID" value="NM_001290182.1"/>
</dbReference>
<dbReference type="RefSeq" id="NP_077757.2">
    <molecule id="Q99P30-1"/>
    <property type="nucleotide sequence ID" value="NM_024437.4"/>
</dbReference>
<dbReference type="RefSeq" id="NP_077766.3">
    <molecule id="Q99P30-3"/>
    <property type="nucleotide sequence ID" value="NM_024446.5"/>
</dbReference>
<dbReference type="SMR" id="Q99P30"/>
<dbReference type="BioGRID" id="212251">
    <property type="interactions" value="1"/>
</dbReference>
<dbReference type="FunCoup" id="Q99P30">
    <property type="interactions" value="231"/>
</dbReference>
<dbReference type="STRING" id="10090.ENSMUSP00000104737"/>
<dbReference type="SwissLipids" id="SLP:000001595">
    <molecule id="Q99P30-1"/>
</dbReference>
<dbReference type="GlyGen" id="Q99P30">
    <property type="glycosylation" value="1 site, 1 O-linked glycan (1 site)"/>
</dbReference>
<dbReference type="iPTMnet" id="Q99P30"/>
<dbReference type="PhosphoSitePlus" id="Q99P30"/>
<dbReference type="SwissPalm" id="Q99P30"/>
<dbReference type="REPRODUCTION-2DPAGE" id="Q99P30"/>
<dbReference type="jPOST" id="Q99P30"/>
<dbReference type="PaxDb" id="10090-ENSMUSP00000073213"/>
<dbReference type="PeptideAtlas" id="Q99P30"/>
<dbReference type="ProteomicsDB" id="291925">
    <molecule id="Q99P30-1"/>
</dbReference>
<dbReference type="ProteomicsDB" id="291926">
    <molecule id="Q99P30-2"/>
</dbReference>
<dbReference type="ProteomicsDB" id="291927">
    <molecule id="Q99P30-3"/>
</dbReference>
<dbReference type="ProteomicsDB" id="291928">
    <molecule id="Q99P30-4"/>
</dbReference>
<dbReference type="ProteomicsDB" id="291929">
    <molecule id="Q99P30-5"/>
</dbReference>
<dbReference type="Pumba" id="Q99P30"/>
<dbReference type="Antibodypedia" id="48153">
    <property type="antibodies" value="25 antibodies from 11 providers"/>
</dbReference>
<dbReference type="DNASU" id="67528"/>
<dbReference type="Ensembl" id="ENSMUST00000073521.12">
    <molecule id="Q99P30-1"/>
    <property type="protein sequence ID" value="ENSMUSP00000073213.6"/>
    <property type="gene ID" value="ENSMUSG00000031767.14"/>
</dbReference>
<dbReference type="Ensembl" id="ENSMUST00000109109.8">
    <molecule id="Q99P30-2"/>
    <property type="protein sequence ID" value="ENSMUSP00000104737.2"/>
    <property type="gene ID" value="ENSMUSG00000031767.14"/>
</dbReference>
<dbReference type="Ensembl" id="ENSMUST00000134593.2">
    <molecule id="Q99P30-5"/>
    <property type="protein sequence ID" value="ENSMUSP00000116868.2"/>
    <property type="gene ID" value="ENSMUSG00000031767.14"/>
</dbReference>
<dbReference type="Ensembl" id="ENSMUST00000147605.8">
    <molecule id="Q99P30-3"/>
    <property type="protein sequence ID" value="ENSMUSP00000114598.2"/>
    <property type="gene ID" value="ENSMUSG00000031767.14"/>
</dbReference>
<dbReference type="GeneID" id="67528"/>
<dbReference type="KEGG" id="mmu:67528"/>
<dbReference type="UCSC" id="uc009nnv.3">
    <molecule id="Q99P30-5"/>
    <property type="organism name" value="mouse"/>
</dbReference>
<dbReference type="UCSC" id="uc009nnw.3">
    <molecule id="Q99P30-1"/>
    <property type="organism name" value="mouse"/>
</dbReference>
<dbReference type="UCSC" id="uc009nny.3">
    <molecule id="Q99P30-3"/>
    <property type="organism name" value="mouse"/>
</dbReference>
<dbReference type="UCSC" id="uc012glf.2">
    <molecule id="Q99P30-4"/>
    <property type="organism name" value="mouse"/>
</dbReference>
<dbReference type="UCSC" id="uc057and.1">
    <molecule id="Q99P30-2"/>
    <property type="organism name" value="mouse"/>
</dbReference>
<dbReference type="AGR" id="MGI:1914778"/>
<dbReference type="CTD" id="283927"/>
<dbReference type="MGI" id="MGI:1914778">
    <property type="gene designation" value="Nudt7"/>
</dbReference>
<dbReference type="VEuPathDB" id="HostDB:ENSMUSG00000031767"/>
<dbReference type="eggNOG" id="KOG3069">
    <property type="taxonomic scope" value="Eukaryota"/>
</dbReference>
<dbReference type="GeneTree" id="ENSGT00940000159631"/>
<dbReference type="HOGENOM" id="CLU_040940_6_0_1"/>
<dbReference type="InParanoid" id="Q99P30"/>
<dbReference type="OMA" id="HSFHFVD"/>
<dbReference type="OrthoDB" id="33355at9989"/>
<dbReference type="PhylomeDB" id="Q99P30"/>
<dbReference type="TreeFam" id="TF106350"/>
<dbReference type="Reactome" id="R-MMU-9033241">
    <property type="pathway name" value="Peroxisomal protein import"/>
</dbReference>
<dbReference type="BioGRID-ORCS" id="67528">
    <property type="hits" value="3 hits in 78 CRISPR screens"/>
</dbReference>
<dbReference type="ChiTaRS" id="Nudt7">
    <property type="organism name" value="mouse"/>
</dbReference>
<dbReference type="PRO" id="PR:Q99P30"/>
<dbReference type="Proteomes" id="UP000000589">
    <property type="component" value="Chromosome 8"/>
</dbReference>
<dbReference type="RNAct" id="Q99P30">
    <property type="molecule type" value="protein"/>
</dbReference>
<dbReference type="Bgee" id="ENSMUSG00000031767">
    <property type="expression patterns" value="Expressed in left lobe of liver and 238 other cell types or tissues"/>
</dbReference>
<dbReference type="GO" id="GO:0005782">
    <property type="term" value="C:peroxisomal matrix"/>
    <property type="evidence" value="ECO:0000304"/>
    <property type="project" value="Reactome"/>
</dbReference>
<dbReference type="GO" id="GO:0005777">
    <property type="term" value="C:peroxisome"/>
    <property type="evidence" value="ECO:0000314"/>
    <property type="project" value="UniProtKB"/>
</dbReference>
<dbReference type="GO" id="GO:0010945">
    <property type="term" value="F:coenzyme A diphosphatase activity"/>
    <property type="evidence" value="ECO:0000314"/>
    <property type="project" value="MGI"/>
</dbReference>
<dbReference type="GO" id="GO:0000287">
    <property type="term" value="F:magnesium ion binding"/>
    <property type="evidence" value="ECO:0000314"/>
    <property type="project" value="UniProtKB"/>
</dbReference>
<dbReference type="GO" id="GO:0030145">
    <property type="term" value="F:manganese ion binding"/>
    <property type="evidence" value="ECO:0007669"/>
    <property type="project" value="InterPro"/>
</dbReference>
<dbReference type="GO" id="GO:0030515">
    <property type="term" value="F:snoRNA binding"/>
    <property type="evidence" value="ECO:0000314"/>
    <property type="project" value="UniProtKB"/>
</dbReference>
<dbReference type="GO" id="GO:0046356">
    <property type="term" value="P:acetyl-CoA catabolic process"/>
    <property type="evidence" value="ECO:0000314"/>
    <property type="project" value="UniProtKB"/>
</dbReference>
<dbReference type="GO" id="GO:0050873">
    <property type="term" value="P:brown fat cell differentiation"/>
    <property type="evidence" value="ECO:0000314"/>
    <property type="project" value="MGI"/>
</dbReference>
<dbReference type="GO" id="GO:0044580">
    <property type="term" value="P:butyryl-CoA catabolic process"/>
    <property type="evidence" value="ECO:0000314"/>
    <property type="project" value="UniProtKB"/>
</dbReference>
<dbReference type="GO" id="GO:0015938">
    <property type="term" value="P:coenzyme A catabolic process"/>
    <property type="evidence" value="ECO:0000314"/>
    <property type="project" value="UniProtKB"/>
</dbReference>
<dbReference type="GO" id="GO:2001294">
    <property type="term" value="P:malonyl-CoA catabolic process"/>
    <property type="evidence" value="ECO:0000314"/>
    <property type="project" value="UniProtKB"/>
</dbReference>
<dbReference type="GO" id="GO:0036114">
    <property type="term" value="P:medium-chain fatty-acyl-CoA catabolic process"/>
    <property type="evidence" value="ECO:0000314"/>
    <property type="project" value="UniProtKB"/>
</dbReference>
<dbReference type="GO" id="GO:0009132">
    <property type="term" value="P:nucleoside diphosphate metabolic process"/>
    <property type="evidence" value="ECO:0007669"/>
    <property type="project" value="InterPro"/>
</dbReference>
<dbReference type="GO" id="GO:1902859">
    <property type="term" value="P:propionyl-CoA catabolic process"/>
    <property type="evidence" value="ECO:0000314"/>
    <property type="project" value="UniProtKB"/>
</dbReference>
<dbReference type="GO" id="GO:1902858">
    <property type="term" value="P:propionyl-CoA metabolic process"/>
    <property type="evidence" value="ECO:0000314"/>
    <property type="project" value="UniProtKB"/>
</dbReference>
<dbReference type="GO" id="GO:1901289">
    <property type="term" value="P:succinyl-CoA catabolic process"/>
    <property type="evidence" value="ECO:0000314"/>
    <property type="project" value="UniProtKB"/>
</dbReference>
<dbReference type="CDD" id="cd03426">
    <property type="entry name" value="NUDIX_CoAse_Nudt7"/>
    <property type="match status" value="1"/>
</dbReference>
<dbReference type="FunFam" id="3.90.79.10:FF:000049">
    <property type="entry name" value="Peroxisomal coenzyme A diphosphatase NUDT7"/>
    <property type="match status" value="1"/>
</dbReference>
<dbReference type="Gene3D" id="3.90.79.10">
    <property type="entry name" value="Nucleoside Triphosphate Pyrophosphohydrolase"/>
    <property type="match status" value="1"/>
</dbReference>
<dbReference type="InterPro" id="IPR045121">
    <property type="entry name" value="CoAse"/>
</dbReference>
<dbReference type="InterPro" id="IPR015797">
    <property type="entry name" value="NUDIX_hydrolase-like_dom_sf"/>
</dbReference>
<dbReference type="InterPro" id="IPR000086">
    <property type="entry name" value="NUDIX_hydrolase_dom"/>
</dbReference>
<dbReference type="InterPro" id="IPR000059">
    <property type="entry name" value="NUDIX_hydrolase_NudL_CS"/>
</dbReference>
<dbReference type="PANTHER" id="PTHR12992">
    <property type="entry name" value="NUDIX HYDROLASE"/>
    <property type="match status" value="1"/>
</dbReference>
<dbReference type="PANTHER" id="PTHR12992:SF24">
    <property type="entry name" value="PEROXISOMAL COENZYME A DIPHOSPHATASE NUDT7"/>
    <property type="match status" value="1"/>
</dbReference>
<dbReference type="Pfam" id="PF00293">
    <property type="entry name" value="NUDIX"/>
    <property type="match status" value="1"/>
</dbReference>
<dbReference type="SUPFAM" id="SSF55811">
    <property type="entry name" value="Nudix"/>
    <property type="match status" value="1"/>
</dbReference>
<dbReference type="PROSITE" id="PS51462">
    <property type="entry name" value="NUDIX"/>
    <property type="match status" value="1"/>
</dbReference>
<dbReference type="PROSITE" id="PS01293">
    <property type="entry name" value="NUDIX_COA"/>
    <property type="match status" value="1"/>
</dbReference>
<proteinExistence type="evidence at protein level"/>
<evidence type="ECO:0000255" key="1">
    <source>
        <dbReference type="PROSITE-ProRule" id="PRU00794"/>
    </source>
</evidence>
<evidence type="ECO:0000269" key="2">
    <source>
    </source>
</evidence>
<evidence type="ECO:0000269" key="3">
    <source>
    </source>
</evidence>
<evidence type="ECO:0000269" key="4">
    <source>
    </source>
</evidence>
<evidence type="ECO:0000269" key="5">
    <source>
    </source>
</evidence>
<evidence type="ECO:0000269" key="6">
    <source>
    </source>
</evidence>
<evidence type="ECO:0000303" key="7">
    <source>
    </source>
</evidence>
<evidence type="ECO:0000303" key="8">
    <source>
    </source>
</evidence>
<evidence type="ECO:0000303" key="9">
    <source>
    </source>
</evidence>
<evidence type="ECO:0000303" key="10">
    <source>
    </source>
</evidence>
<evidence type="ECO:0000305" key="11"/>
<evidence type="ECO:0000305" key="12">
    <source>
    </source>
</evidence>
<evidence type="ECO:0000305" key="13">
    <source>
    </source>
</evidence>
<evidence type="ECO:0000305" key="14">
    <source>
    </source>
</evidence>
<evidence type="ECO:0000312" key="15">
    <source>
        <dbReference type="MGI" id="MGI:1914778"/>
    </source>
</evidence>
<evidence type="ECO:0007744" key="16">
    <source>
    </source>
</evidence>
<accession>Q99P30</accession>
<accession>Q6IS65</accession>
<accession>Q8BU08</accession>
<accession>Q8K260</accession>
<accession>Q9D0Q3</accession>
<accession>Q9DBI9</accession>
<organism>
    <name type="scientific">Mus musculus</name>
    <name type="common">Mouse</name>
    <dbReference type="NCBI Taxonomy" id="10090"/>
    <lineage>
        <taxon>Eukaryota</taxon>
        <taxon>Metazoa</taxon>
        <taxon>Chordata</taxon>
        <taxon>Craniata</taxon>
        <taxon>Vertebrata</taxon>
        <taxon>Euteleostomi</taxon>
        <taxon>Mammalia</taxon>
        <taxon>Eutheria</taxon>
        <taxon>Euarchontoglires</taxon>
        <taxon>Glires</taxon>
        <taxon>Rodentia</taxon>
        <taxon>Myomorpha</taxon>
        <taxon>Muroidea</taxon>
        <taxon>Muridae</taxon>
        <taxon>Murinae</taxon>
        <taxon>Mus</taxon>
        <taxon>Mus</taxon>
    </lineage>
</organism>
<feature type="chain" id="PRO_0000057141" description="Peroxisomal coenzyme A diphosphatase NUDT7">
    <location>
        <begin position="1"/>
        <end position="236"/>
    </location>
</feature>
<feature type="domain" description="Nudix hydrolase" evidence="1">
    <location>
        <begin position="37"/>
        <end position="169"/>
    </location>
</feature>
<feature type="short sequence motif" description="Nudix box">
    <location>
        <begin position="77"/>
        <end position="98"/>
    </location>
</feature>
<feature type="short sequence motif" description="Microbody targeting signal" evidence="11">
    <location>
        <begin position="234"/>
        <end position="236"/>
    </location>
</feature>
<feature type="binding site" evidence="13">
    <location>
        <position position="92"/>
    </location>
    <ligand>
        <name>Mg(2+)</name>
        <dbReference type="ChEBI" id="CHEBI:18420"/>
    </ligand>
</feature>
<feature type="binding site" evidence="13">
    <location>
        <position position="96"/>
    </location>
    <ligand>
        <name>Mg(2+)</name>
        <dbReference type="ChEBI" id="CHEBI:18420"/>
    </ligand>
</feature>
<feature type="site" description="Important for coenzyme A binding" evidence="5">
    <location>
        <position position="66"/>
    </location>
</feature>
<feature type="modified residue" description="N6-succinyllysine" evidence="16">
    <location>
        <position position="20"/>
    </location>
</feature>
<feature type="modified residue" description="N6-succinyllysine" evidence="16">
    <location>
        <position position="178"/>
    </location>
</feature>
<feature type="splice variant" id="VSP_014271" description="In isoform 4." evidence="9">
    <original>MSRPCGLPEPVRNNLIDDAKARLRKSDVGTRYSHLSSNKFSVLVPLLARGGKLYLMFTVRSDK</original>
    <variation>MRVRTICFPKSPAASKRKYCRADVATLWTPGACQ</variation>
    <location>
        <begin position="1"/>
        <end position="63"/>
    </location>
</feature>
<feature type="splice variant" id="VSP_014272" description="In isoform 2." evidence="7 9">
    <original>MSRPCGLPEPVR</original>
    <variation>MVQSLELPQRQPCHFGSWIKRSPSGLTSKSPSQVLG</variation>
    <location>
        <begin position="1"/>
        <end position="12"/>
    </location>
</feature>
<feature type="splice variant" id="VSP_014273" description="In isoform 3." evidence="9">
    <location>
        <begin position="97"/>
        <end position="116"/>
    </location>
</feature>
<feature type="splice variant" id="VSP_014274" description="In isoform 5." evidence="8">
    <original>NDALVTPVVGFLDHNFQAQPNADEVKEVFFVPLDYFLHPQVYYQKQITQSGRDFI</original>
    <variation>VRTGMGPPELSGASTKFPNTLGTEPGELSPCVDSVLCELCGPSHSIQEERGEPPQ</variation>
    <location>
        <begin position="117"/>
        <end position="171"/>
    </location>
</feature>
<feature type="splice variant" id="VSP_014275" description="In isoform 5." evidence="8">
    <location>
        <begin position="172"/>
        <end position="236"/>
    </location>
</feature>
<feature type="mutagenesis site" description="2- to 3-fold increase in Km for CoA." evidence="5">
    <original>R</original>
    <variation>M</variation>
    <location>
        <position position="60"/>
    </location>
</feature>
<feature type="mutagenesis site" description="3-fold increase in Km for CoA." evidence="5">
    <original>K</original>
    <variation>A</variation>
    <location>
        <position position="65"/>
    </location>
</feature>
<feature type="mutagenesis site" description="10-fold increase in Km for CoA." evidence="5">
    <original>R</original>
    <variation>A</variation>
    <location>
        <position position="66"/>
    </location>
</feature>
<feature type="mutagenesis site" description="No significant effect on Km for CoA." evidence="5">
    <original>R</original>
    <variation>M</variation>
    <location>
        <position position="66"/>
    </location>
</feature>
<feature type="mutagenesis site" description="No significant effect on Km for CoA." evidence="5">
    <original>D</original>
    <variation>A</variation>
    <location>
        <position position="79"/>
    </location>
</feature>
<feature type="mutagenesis site" description="Loss of fatty acyl-coenzyme A diphosphatase activity." evidence="5">
    <original>E</original>
    <variation>A</variation>
    <location>
        <position position="92"/>
    </location>
</feature>
<feature type="mutagenesis site" description="No significant effect on Km for CoA." evidence="5">
    <original>E</original>
    <variation>A</variation>
    <location>
        <position position="95"/>
    </location>
</feature>
<feature type="mutagenesis site" description="Loss of fatty acyl-coenzyme A diphosphatase activity." evidence="5">
    <original>E</original>
    <variation>A</variation>
    <location>
        <position position="96"/>
    </location>
</feature>
<feature type="sequence conflict" description="In Ref. 1; AAK07483." evidence="11" ref="1">
    <original>K</original>
    <variation>E</variation>
    <location>
        <position position="161"/>
    </location>
</feature>
<reference key="1">
    <citation type="journal article" date="2001" name="Biochem. J.">
        <title>The mouse Nudt7 gene encodes a peroxisomal nudix hydrolase specific for coenzyme A and its derivatives.</title>
        <authorList>
            <person name="Gasmi L."/>
            <person name="McLennan A.G."/>
        </authorList>
    </citation>
    <scope>NUCLEOTIDE SEQUENCE [MRNA] (ISOFORMS 1 AND 2)</scope>
    <scope>FUNCTION</scope>
    <scope>ENZYME ACTIVITY</scope>
    <scope>BIOPHYSICOCHEMICAL PROPERTIES</scope>
    <scope>COFACTOR</scope>
    <scope>SUBCELLULAR LOCATION</scope>
    <scope>TISSUE SPECIFICITY</scope>
    <source>
        <strain>C57BL/6J</strain>
        <tissue>Liver</tissue>
    </source>
</reference>
<reference key="2">
    <citation type="journal article" date="2005" name="Science">
        <title>The transcriptional landscape of the mammalian genome.</title>
        <authorList>
            <person name="Carninci P."/>
            <person name="Kasukawa T."/>
            <person name="Katayama S."/>
            <person name="Gough J."/>
            <person name="Frith M.C."/>
            <person name="Maeda N."/>
            <person name="Oyama R."/>
            <person name="Ravasi T."/>
            <person name="Lenhard B."/>
            <person name="Wells C."/>
            <person name="Kodzius R."/>
            <person name="Shimokawa K."/>
            <person name="Bajic V.B."/>
            <person name="Brenner S.E."/>
            <person name="Batalov S."/>
            <person name="Forrest A.R."/>
            <person name="Zavolan M."/>
            <person name="Davis M.J."/>
            <person name="Wilming L.G."/>
            <person name="Aidinis V."/>
            <person name="Allen J.E."/>
            <person name="Ambesi-Impiombato A."/>
            <person name="Apweiler R."/>
            <person name="Aturaliya R.N."/>
            <person name="Bailey T.L."/>
            <person name="Bansal M."/>
            <person name="Baxter L."/>
            <person name="Beisel K.W."/>
            <person name="Bersano T."/>
            <person name="Bono H."/>
            <person name="Chalk A.M."/>
            <person name="Chiu K.P."/>
            <person name="Choudhary V."/>
            <person name="Christoffels A."/>
            <person name="Clutterbuck D.R."/>
            <person name="Crowe M.L."/>
            <person name="Dalla E."/>
            <person name="Dalrymple B.P."/>
            <person name="de Bono B."/>
            <person name="Della Gatta G."/>
            <person name="di Bernardo D."/>
            <person name="Down T."/>
            <person name="Engstrom P."/>
            <person name="Fagiolini M."/>
            <person name="Faulkner G."/>
            <person name="Fletcher C.F."/>
            <person name="Fukushima T."/>
            <person name="Furuno M."/>
            <person name="Futaki S."/>
            <person name="Gariboldi M."/>
            <person name="Georgii-Hemming P."/>
            <person name="Gingeras T.R."/>
            <person name="Gojobori T."/>
            <person name="Green R.E."/>
            <person name="Gustincich S."/>
            <person name="Harbers M."/>
            <person name="Hayashi Y."/>
            <person name="Hensch T.K."/>
            <person name="Hirokawa N."/>
            <person name="Hill D."/>
            <person name="Huminiecki L."/>
            <person name="Iacono M."/>
            <person name="Ikeo K."/>
            <person name="Iwama A."/>
            <person name="Ishikawa T."/>
            <person name="Jakt M."/>
            <person name="Kanapin A."/>
            <person name="Katoh M."/>
            <person name="Kawasawa Y."/>
            <person name="Kelso J."/>
            <person name="Kitamura H."/>
            <person name="Kitano H."/>
            <person name="Kollias G."/>
            <person name="Krishnan S.P."/>
            <person name="Kruger A."/>
            <person name="Kummerfeld S.K."/>
            <person name="Kurochkin I.V."/>
            <person name="Lareau L.F."/>
            <person name="Lazarevic D."/>
            <person name="Lipovich L."/>
            <person name="Liu J."/>
            <person name="Liuni S."/>
            <person name="McWilliam S."/>
            <person name="Madan Babu M."/>
            <person name="Madera M."/>
            <person name="Marchionni L."/>
            <person name="Matsuda H."/>
            <person name="Matsuzawa S."/>
            <person name="Miki H."/>
            <person name="Mignone F."/>
            <person name="Miyake S."/>
            <person name="Morris K."/>
            <person name="Mottagui-Tabar S."/>
            <person name="Mulder N."/>
            <person name="Nakano N."/>
            <person name="Nakauchi H."/>
            <person name="Ng P."/>
            <person name="Nilsson R."/>
            <person name="Nishiguchi S."/>
            <person name="Nishikawa S."/>
            <person name="Nori F."/>
            <person name="Ohara O."/>
            <person name="Okazaki Y."/>
            <person name="Orlando V."/>
            <person name="Pang K.C."/>
            <person name="Pavan W.J."/>
            <person name="Pavesi G."/>
            <person name="Pesole G."/>
            <person name="Petrovsky N."/>
            <person name="Piazza S."/>
            <person name="Reed J."/>
            <person name="Reid J.F."/>
            <person name="Ring B.Z."/>
            <person name="Ringwald M."/>
            <person name="Rost B."/>
            <person name="Ruan Y."/>
            <person name="Salzberg S.L."/>
            <person name="Sandelin A."/>
            <person name="Schneider C."/>
            <person name="Schoenbach C."/>
            <person name="Sekiguchi K."/>
            <person name="Semple C.A."/>
            <person name="Seno S."/>
            <person name="Sessa L."/>
            <person name="Sheng Y."/>
            <person name="Shibata Y."/>
            <person name="Shimada H."/>
            <person name="Shimada K."/>
            <person name="Silva D."/>
            <person name="Sinclair B."/>
            <person name="Sperling S."/>
            <person name="Stupka E."/>
            <person name="Sugiura K."/>
            <person name="Sultana R."/>
            <person name="Takenaka Y."/>
            <person name="Taki K."/>
            <person name="Tammoja K."/>
            <person name="Tan S.L."/>
            <person name="Tang S."/>
            <person name="Taylor M.S."/>
            <person name="Tegner J."/>
            <person name="Teichmann S.A."/>
            <person name="Ueda H.R."/>
            <person name="van Nimwegen E."/>
            <person name="Verardo R."/>
            <person name="Wei C.L."/>
            <person name="Yagi K."/>
            <person name="Yamanishi H."/>
            <person name="Zabarovsky E."/>
            <person name="Zhu S."/>
            <person name="Zimmer A."/>
            <person name="Hide W."/>
            <person name="Bult C."/>
            <person name="Grimmond S.M."/>
            <person name="Teasdale R.D."/>
            <person name="Liu E.T."/>
            <person name="Brusic V."/>
            <person name="Quackenbush J."/>
            <person name="Wahlestedt C."/>
            <person name="Mattick J.S."/>
            <person name="Hume D.A."/>
            <person name="Kai C."/>
            <person name="Sasaki D."/>
            <person name="Tomaru Y."/>
            <person name="Fukuda S."/>
            <person name="Kanamori-Katayama M."/>
            <person name="Suzuki M."/>
            <person name="Aoki J."/>
            <person name="Arakawa T."/>
            <person name="Iida J."/>
            <person name="Imamura K."/>
            <person name="Itoh M."/>
            <person name="Kato T."/>
            <person name="Kawaji H."/>
            <person name="Kawagashira N."/>
            <person name="Kawashima T."/>
            <person name="Kojima M."/>
            <person name="Kondo S."/>
            <person name="Konno H."/>
            <person name="Nakano K."/>
            <person name="Ninomiya N."/>
            <person name="Nishio T."/>
            <person name="Okada M."/>
            <person name="Plessy C."/>
            <person name="Shibata K."/>
            <person name="Shiraki T."/>
            <person name="Suzuki S."/>
            <person name="Tagami M."/>
            <person name="Waki K."/>
            <person name="Watahiki A."/>
            <person name="Okamura-Oho Y."/>
            <person name="Suzuki H."/>
            <person name="Kawai J."/>
            <person name="Hayashizaki Y."/>
        </authorList>
    </citation>
    <scope>NUCLEOTIDE SEQUENCE [LARGE SCALE MRNA] (ISOFORMS 2; 3 AND 4)</scope>
    <source>
        <strain>C57BL/6J</strain>
        <strain>NOD</strain>
        <tissue>Liver</tissue>
        <tissue>Thymus</tissue>
    </source>
</reference>
<reference key="3">
    <citation type="journal article" date="2004" name="Genome Res.">
        <title>The status, quality, and expansion of the NIH full-length cDNA project: the Mammalian Gene Collection (MGC).</title>
        <authorList>
            <consortium name="The MGC Project Team"/>
        </authorList>
    </citation>
    <scope>NUCLEOTIDE SEQUENCE [LARGE SCALE MRNA] (ISOFORMS 1 AND 5)</scope>
    <source>
        <strain>C57BL/6J</strain>
        <strain>FVB/N</strain>
        <tissue>Liver</tissue>
        <tissue>Mammary gland</tissue>
    </source>
</reference>
<reference key="4">
    <citation type="journal article" date="2008" name="J. Biochem.">
        <title>The nudix hydrolase 7 is an Acyl-CoA diphosphatase involved in regulating peroxisomal coenzyme A homeostasis.</title>
        <authorList>
            <person name="Reilly S.J."/>
            <person name="Tillander V."/>
            <person name="Ofman R."/>
            <person name="Alexson S.E."/>
            <person name="Hunt M.C."/>
        </authorList>
    </citation>
    <scope>ALTERNATIVE SPLICING</scope>
    <scope>FUNCTION</scope>
    <scope>CATALYTIC ACTIVITY</scope>
    <scope>TISSUE SPECIFICITY</scope>
    <scope>SUBCELLULAR LOCATION</scope>
    <scope>INDUCTION BY PEROXISOMAL BETA-OXYDATION (ISOFORM 1)</scope>
    <scope>BIOPHYSICOCHEMICAL PROPERTIES</scope>
</reference>
<reference key="5">
    <citation type="journal article" date="2010" name="Cell">
        <title>A tissue-specific atlas of mouse protein phosphorylation and expression.</title>
        <authorList>
            <person name="Huttlin E.L."/>
            <person name="Jedrychowski M.P."/>
            <person name="Elias J.E."/>
            <person name="Goswami T."/>
            <person name="Rad R."/>
            <person name="Beausoleil S.A."/>
            <person name="Villen J."/>
            <person name="Haas W."/>
            <person name="Sowa M.E."/>
            <person name="Gygi S.P."/>
        </authorList>
    </citation>
    <scope>IDENTIFICATION BY MASS SPECTROMETRY [LARGE SCALE ANALYSIS]</scope>
    <source>
        <tissue>Brain</tissue>
        <tissue>Brown adipose tissue</tissue>
        <tissue>Heart</tissue>
        <tissue>Kidney</tissue>
        <tissue>Liver</tissue>
    </source>
</reference>
<reference key="6">
    <citation type="journal article" date="2010" name="Mol. Cell">
        <title>Multiple mRNA decapping enzymes in mammalian cells.</title>
        <authorList>
            <person name="Song M.G."/>
            <person name="Li Y."/>
            <person name="Kiledjian M."/>
        </authorList>
    </citation>
    <scope>ABSENCE OF FUNCTION AS A DECAPPING ENZYME</scope>
    <scope>RNA-BINDING</scope>
</reference>
<reference key="7">
    <citation type="journal article" date="2013" name="Mol. Cell">
        <title>SIRT5-mediated lysine desuccinylation impacts diverse metabolic pathways.</title>
        <authorList>
            <person name="Park J."/>
            <person name="Chen Y."/>
            <person name="Tishkoff D.X."/>
            <person name="Peng C."/>
            <person name="Tan M."/>
            <person name="Dai L."/>
            <person name="Xie Z."/>
            <person name="Zhang Y."/>
            <person name="Zwaans B.M."/>
            <person name="Skinner M.E."/>
            <person name="Lombard D.B."/>
            <person name="Zhao Y."/>
        </authorList>
    </citation>
    <scope>SUCCINYLATION [LARGE SCALE ANALYSIS] AT LYS-20 AND LYS-178</scope>
    <scope>IDENTIFICATION BY MASS SPECTROMETRY [LARGE SCALE ANALYSIS]</scope>
    <source>
        <tissue>Liver</tissue>
    </source>
</reference>
<reference key="8">
    <citation type="journal article" date="2018" name="J. Biol. Chem.">
        <title>Nudt19 is a renal CoA diphosphohydrolase with biochemical and regulatory properties that are distinct from the hepatic Nudt7 isoform.</title>
        <authorList>
            <person name="Shumar S.A."/>
            <person name="Kerr E.W."/>
            <person name="Geldenhuys W.J."/>
            <person name="Montgomery G.E."/>
            <person name="Fagone P."/>
            <person name="Thirawatananond P."/>
            <person name="Saavedra H."/>
            <person name="Gabelli S.B."/>
            <person name="Leonardi R."/>
        </authorList>
    </citation>
    <scope>FUNCTION</scope>
    <scope>CATALYTIC ACTIVITY</scope>
    <scope>TISSUE SPECIFICITY</scope>
    <scope>SUBUNIT</scope>
    <scope>BIOPHYSICOCHEMICAL PROPERTIES</scope>
    <scope>COFACTOR</scope>
    <scope>COENZYME A BINDING SITES</scope>
    <scope>MAGNESIUM BINDING SITES</scope>
    <scope>MUTAGENESIS OF ARG-60; LYS-65; ARG-66; ASP-79; GLU-92; GLU-95 AND GLU-96</scope>
</reference>
<reference key="9">
    <citation type="journal article" date="2020" name="Nucleic Acids Res.">
        <title>Mammalian Nudix proteins cleave nucleotide metabolite caps on RNAs.</title>
        <authorList>
            <person name="Sharma S."/>
            <person name="Grudzien-Nogalska E."/>
            <person name="Hamilton K."/>
            <person name="Jiao X."/>
            <person name="Yang J."/>
            <person name="Tong L."/>
            <person name="Kiledjian M."/>
        </authorList>
    </citation>
    <scope>FUNCTION</scope>
    <scope>CATALYTIC ACTIVITY</scope>
</reference>
<keyword id="KW-0025">Alternative splicing</keyword>
<keyword id="KW-0378">Hydrolase</keyword>
<keyword id="KW-0460">Magnesium</keyword>
<keyword id="KW-0464">Manganese</keyword>
<keyword id="KW-0479">Metal-binding</keyword>
<keyword id="KW-0576">Peroxisome</keyword>
<keyword id="KW-1185">Reference proteome</keyword>
<keyword id="KW-0694">RNA-binding</keyword>
<comment type="function">
    <text evidence="2 3 4 5 6">Fatty acyl-coenzyme A (CoA) diphosphatase that hydrolyzes fatty acyl-CoA to yield acyl-4'-phosphopantetheine and adenosine 3',5'-bisphosphate (PubMed:11415433, PubMed:18799520, PubMed:29378847). Cleaves CoA, CoA esters and oxidized CoA with similar efficiencies (PubMed:11415433). Preferentially hydrolyzes medium-chain acyl-CoAs and bile acid-CoAs (PubMed:18799520). Has no activity toward NDP-sugars, CDP-alcohols, (deoxy)nucleoside 5'-triphosphates, nucleoside 5'-di or monophosphates, diadenosine polyphosphates, NAD, NADH, NADP, NADPH or thymidine-5'-monophospho-p-nitrophenyl ester (PubMed:18799520). May be required to eliminate oxidized CoA from peroxisomes, or regulate CoA and acyl-CoA levels in this organelle in response to metabolic demand (PubMed:18799520). Does not play a role in U8 snoRNA decapping activity (PubMed:21070968). Binds U8 snoRNA (PubMed:21070968). Exhibits decapping activity towards dpCoA-capped RNAs in vitro (PubMed:32432673).</text>
</comment>
<comment type="catalytic activity">
    <reaction evidence="3 5">
        <text>hexanoyl-CoA + H2O = hexanoyl-4'-phosphopantetheine + adenosine 3',5'-bisphosphate + 2 H(+)</text>
        <dbReference type="Rhea" id="RHEA:49980"/>
        <dbReference type="ChEBI" id="CHEBI:15377"/>
        <dbReference type="ChEBI" id="CHEBI:15378"/>
        <dbReference type="ChEBI" id="CHEBI:58343"/>
        <dbReference type="ChEBI" id="CHEBI:62620"/>
        <dbReference type="ChEBI" id="CHEBI:132012"/>
    </reaction>
    <physiologicalReaction direction="left-to-right" evidence="12">
        <dbReference type="Rhea" id="RHEA:49981"/>
    </physiologicalReaction>
</comment>
<comment type="catalytic activity">
    <reaction evidence="3 5">
        <text>octanoyl-CoA + H2O = S-octanoyl-4'-phosphopantetheine + adenosine 3',5'-bisphosphate + 2 H(+)</text>
        <dbReference type="Rhea" id="RHEA:50016"/>
        <dbReference type="ChEBI" id="CHEBI:15377"/>
        <dbReference type="ChEBI" id="CHEBI:15378"/>
        <dbReference type="ChEBI" id="CHEBI:57386"/>
        <dbReference type="ChEBI" id="CHEBI:58343"/>
        <dbReference type="ChEBI" id="CHEBI:132013"/>
    </reaction>
    <physiologicalReaction direction="left-to-right" evidence="12">
        <dbReference type="Rhea" id="RHEA:50017"/>
    </physiologicalReaction>
</comment>
<comment type="catalytic activity">
    <reaction evidence="3 5">
        <text>butanoyl-CoA + H2O = S-butanoyl-4'-phosphopantetheine + adenosine 3',5'-bisphosphate + 2 H(+)</text>
        <dbReference type="Rhea" id="RHEA:49976"/>
        <dbReference type="ChEBI" id="CHEBI:15377"/>
        <dbReference type="ChEBI" id="CHEBI:15378"/>
        <dbReference type="ChEBI" id="CHEBI:57371"/>
        <dbReference type="ChEBI" id="CHEBI:58343"/>
        <dbReference type="ChEBI" id="CHEBI:132011"/>
    </reaction>
    <physiologicalReaction direction="left-to-right" evidence="12">
        <dbReference type="Rhea" id="RHEA:49977"/>
    </physiologicalReaction>
</comment>
<comment type="catalytic activity">
    <reaction evidence="3">
        <text>decanoyl-CoA + H2O = decanoyl-4'-phosphopantetheine + adenosine 3',5'-bisphosphate + 2 H(+)</text>
        <dbReference type="Rhea" id="RHEA:50020"/>
        <dbReference type="ChEBI" id="CHEBI:15377"/>
        <dbReference type="ChEBI" id="CHEBI:15378"/>
        <dbReference type="ChEBI" id="CHEBI:58343"/>
        <dbReference type="ChEBI" id="CHEBI:61430"/>
        <dbReference type="ChEBI" id="CHEBI:132014"/>
    </reaction>
    <physiologicalReaction direction="left-to-right" evidence="12">
        <dbReference type="Rhea" id="RHEA:50021"/>
    </physiologicalReaction>
</comment>
<comment type="catalytic activity">
    <reaction evidence="3">
        <text>dodecanoyl-CoA + H2O = S-dodecanoyl-4'-phosphopantetheine + adenosine 3',5'-bisphosphate + 2 H(+)</text>
        <dbReference type="Rhea" id="RHEA:50024"/>
        <dbReference type="ChEBI" id="CHEBI:15377"/>
        <dbReference type="ChEBI" id="CHEBI:15378"/>
        <dbReference type="ChEBI" id="CHEBI:57375"/>
        <dbReference type="ChEBI" id="CHEBI:58343"/>
        <dbReference type="ChEBI" id="CHEBI:132015"/>
    </reaction>
    <physiologicalReaction direction="left-to-right" evidence="12">
        <dbReference type="Rhea" id="RHEA:50025"/>
    </physiologicalReaction>
</comment>
<comment type="catalytic activity">
    <reaction evidence="3">
        <text>tetradecanoyl-CoA + H2O = tetradecanoyl-4'-phosphopantetheine + adenosine 3',5'-bisphosphate + 2 H(+)</text>
        <dbReference type="Rhea" id="RHEA:50028"/>
        <dbReference type="ChEBI" id="CHEBI:15377"/>
        <dbReference type="ChEBI" id="CHEBI:15378"/>
        <dbReference type="ChEBI" id="CHEBI:57385"/>
        <dbReference type="ChEBI" id="CHEBI:58343"/>
        <dbReference type="ChEBI" id="CHEBI:132017"/>
    </reaction>
    <physiologicalReaction direction="left-to-right" evidence="12">
        <dbReference type="Rhea" id="RHEA:50029"/>
    </physiologicalReaction>
</comment>
<comment type="catalytic activity">
    <reaction evidence="3">
        <text>choloyl-CoA + H2O = S-choloyl-4'-phosphopantetheine + adenosine 3',5'-bisphosphate + 2 H(+)</text>
        <dbReference type="Rhea" id="RHEA:50036"/>
        <dbReference type="ChEBI" id="CHEBI:15377"/>
        <dbReference type="ChEBI" id="CHEBI:15378"/>
        <dbReference type="ChEBI" id="CHEBI:57373"/>
        <dbReference type="ChEBI" id="CHEBI:58343"/>
        <dbReference type="ChEBI" id="CHEBI:132020"/>
    </reaction>
    <physiologicalReaction direction="left-to-right" evidence="12">
        <dbReference type="Rhea" id="RHEA:50037"/>
    </physiologicalReaction>
</comment>
<comment type="catalytic activity">
    <reaction evidence="3">
        <text>3alpha,7alpha,12alpha-trihydroxy-5beta-cholestan-26-oyl-CoA + H2O = 3alpha,7alpha,12alpha-trihydroxy-5beta-cholestan-26-oyl-4'-phosphopantetheine + adenosine 3',5'-bisphosphate + 2 H(+)</text>
        <dbReference type="Rhea" id="RHEA:50040"/>
        <dbReference type="ChEBI" id="CHEBI:15377"/>
        <dbReference type="ChEBI" id="CHEBI:15378"/>
        <dbReference type="ChEBI" id="CHEBI:58343"/>
        <dbReference type="ChEBI" id="CHEBI:63001"/>
        <dbReference type="ChEBI" id="CHEBI:132021"/>
    </reaction>
    <physiologicalReaction direction="left-to-right" evidence="12">
        <dbReference type="Rhea" id="RHEA:50041"/>
    </physiologicalReaction>
</comment>
<comment type="catalytic activity">
    <reaction evidence="3 5">
        <text>acetyl-CoA + H2O = S-acetyl-4'-phosphopantetheine + adenosine 3',5'-bisphosphate + 2 H(+)</text>
        <dbReference type="Rhea" id="RHEA:64992"/>
        <dbReference type="ChEBI" id="CHEBI:15377"/>
        <dbReference type="ChEBI" id="CHEBI:15378"/>
        <dbReference type="ChEBI" id="CHEBI:57288"/>
        <dbReference type="ChEBI" id="CHEBI:58343"/>
        <dbReference type="ChEBI" id="CHEBI:156266"/>
    </reaction>
    <physiologicalReaction direction="left-to-right" evidence="12">
        <dbReference type="Rhea" id="RHEA:64993"/>
    </physiologicalReaction>
</comment>
<comment type="catalytic activity">
    <reaction evidence="3 5">
        <text>CoA + H2O = (R)-4'-phosphopantetheine + adenosine 3',5'-bisphosphate + 2 H(+)</text>
        <dbReference type="Rhea" id="RHEA:64988"/>
        <dbReference type="ChEBI" id="CHEBI:15377"/>
        <dbReference type="ChEBI" id="CHEBI:15378"/>
        <dbReference type="ChEBI" id="CHEBI:57287"/>
        <dbReference type="ChEBI" id="CHEBI:58343"/>
        <dbReference type="ChEBI" id="CHEBI:61723"/>
        <dbReference type="EC" id="3.6.1.77"/>
    </reaction>
    <physiologicalReaction direction="left-to-right" evidence="12">
        <dbReference type="Rhea" id="RHEA:64989"/>
    </physiologicalReaction>
</comment>
<comment type="catalytic activity">
    <reaction evidence="5">
        <text>propanoyl-CoA + H2O = propanoyl-4'-phosphopantetheine + adenosine 3',5'-bisphosphate + 2 H(+)</text>
        <dbReference type="Rhea" id="RHEA:67464"/>
        <dbReference type="ChEBI" id="CHEBI:15377"/>
        <dbReference type="ChEBI" id="CHEBI:15378"/>
        <dbReference type="ChEBI" id="CHEBI:57392"/>
        <dbReference type="ChEBI" id="CHEBI:58343"/>
        <dbReference type="ChEBI" id="CHEBI:172362"/>
    </reaction>
    <physiologicalReaction direction="left-to-right" evidence="13">
        <dbReference type="Rhea" id="RHEA:67465"/>
    </physiologicalReaction>
</comment>
<comment type="catalytic activity">
    <reaction evidence="5">
        <text>malonyl-CoA + H2O = malonyl-4'-phosphopantetheine + adenosine 3',5'-bisphosphate + 2 H(+)</text>
        <dbReference type="Rhea" id="RHEA:67468"/>
        <dbReference type="ChEBI" id="CHEBI:15377"/>
        <dbReference type="ChEBI" id="CHEBI:15378"/>
        <dbReference type="ChEBI" id="CHEBI:57384"/>
        <dbReference type="ChEBI" id="CHEBI:58343"/>
        <dbReference type="ChEBI" id="CHEBI:172363"/>
    </reaction>
    <physiologicalReaction direction="left-to-right" evidence="13">
        <dbReference type="Rhea" id="RHEA:67469"/>
    </physiologicalReaction>
</comment>
<comment type="catalytic activity">
    <reaction evidence="5">
        <text>succinyl-CoA + H2O = succinyl-4'-phosphopantetheine + adenosine 3',5'-bisphosphate + 2 H(+)</text>
        <dbReference type="Rhea" id="RHEA:67472"/>
        <dbReference type="ChEBI" id="CHEBI:15377"/>
        <dbReference type="ChEBI" id="CHEBI:15378"/>
        <dbReference type="ChEBI" id="CHEBI:57292"/>
        <dbReference type="ChEBI" id="CHEBI:58343"/>
        <dbReference type="ChEBI" id="CHEBI:172364"/>
    </reaction>
    <physiologicalReaction direction="left-to-right" evidence="13">
        <dbReference type="Rhea" id="RHEA:67473"/>
    </physiologicalReaction>
</comment>
<comment type="catalytic activity">
    <reaction evidence="14">
        <text>a 5'-end CoA-ribonucleoside in mRNA + H2O = a 5'-end phospho-adenosine-phospho-ribonucleoside in mRNA + (R)-4'-phosphopantetheine + 2 H(+)</text>
        <dbReference type="Rhea" id="RHEA:67592"/>
        <dbReference type="Rhea" id="RHEA-COMP:15719"/>
        <dbReference type="Rhea" id="RHEA-COMP:17276"/>
        <dbReference type="ChEBI" id="CHEBI:15377"/>
        <dbReference type="ChEBI" id="CHEBI:15378"/>
        <dbReference type="ChEBI" id="CHEBI:61723"/>
        <dbReference type="ChEBI" id="CHEBI:144051"/>
        <dbReference type="ChEBI" id="CHEBI:172371"/>
    </reaction>
    <physiologicalReaction direction="left-to-right" evidence="14">
        <dbReference type="Rhea" id="RHEA:67593"/>
    </physiologicalReaction>
</comment>
<comment type="cofactor">
    <cofactor evidence="2">
        <name>Mn(2+)</name>
        <dbReference type="ChEBI" id="CHEBI:29035"/>
    </cofactor>
    <cofactor evidence="2 5">
        <name>Mg(2+)</name>
        <dbReference type="ChEBI" id="CHEBI:18420"/>
    </cofactor>
</comment>
<comment type="activity regulation">
    <text>Inhibited by fluoride.</text>
</comment>
<comment type="biophysicochemical properties">
    <kinetics>
        <KM evidence="2">0.24 mM for CoA</KM>
        <KM evidence="3">0.157 mM for CoA</KM>
        <KM evidence="3">0.27 mM for acetyl-CoA</KM>
        <KM evidence="3">92.6 uM for hexanoyl-CoA</KM>
        <KM evidence="3">62.6 uM for octanoyl-CoA</KM>
        <KM evidence="3">34 uM for tetradecanoyl-CoA</KM>
        <KM evidence="3">157.9 uM for butanoyl-CoA</KM>
        <KM evidence="3">242 uM for decanoyl-CoA</KM>
        <KM evidence="3">22.4 uM for dodecanoyl-CoA</KM>
        <KM evidence="3">221.4 uM for propionyl-CoA</KM>
        <KM evidence="3">28.7 uM for palmitoyl-CoA</KM>
        <KM evidence="2">0.43 mM for acetyl-CoA</KM>
        <KM evidence="2">0.235 mM for CoA-S-S-CoA</KM>
        <KM evidence="2">0.33 mM for succinyl-CoA</KM>
        <KM evidence="2">0.48 mM for 3'-dephospho-CoA</KM>
        <KM evidence="5">283 uM for CoA</KM>
        <Vmax evidence="3">0.13 umol/min/mg enzyme toward CoA</Vmax>
        <Vmax evidence="3">0.27 umol/min/mg enzyme toward acetyl-CoA</Vmax>
        <Vmax evidence="3">0.33 umol/min/mg enzyme toward propionyl-CoA</Vmax>
        <Vmax evidence="3">0.49 umol/min/mg enzyme toward butanoyl-CoA</Vmax>
        <Vmax evidence="3">0.83 umol/min/mg enzyme toward hexanoyl-CoA</Vmax>
        <Vmax evidence="3">1.08 umol/min/mg enzyme toward octanoyl-CoA</Vmax>
        <Vmax evidence="3">1.84 umol/min/mg enzyme toward decanoyl-CoA</Vmax>
        <Vmax evidence="3">1.06 umol/min/mg enzyme toward dodecanoyl-CoA</Vmax>
        <Vmax evidence="3">0.41 umol/min/mg enzyme toward tetradecanoyl-CoA</Vmax>
        <Vmax evidence="3">0.15 umol/min/mg enzyme toward palmitoyl-CoA</Vmax>
    </kinetics>
    <phDependence>
        <text evidence="2">Optimum pH is 8.</text>
    </phDependence>
</comment>
<comment type="subunit">
    <text evidence="5">Monomer.</text>
</comment>
<comment type="subcellular location">
    <subcellularLocation>
        <location evidence="2 3">Peroxisome</location>
    </subcellularLocation>
</comment>
<comment type="alternative products">
    <event type="alternative splicing"/>
    <isoform>
        <id>Q99P30-1</id>
        <name>1</name>
        <name>Alpha</name>
        <name evidence="10">Nudt7alpha</name>
        <sequence type="displayed"/>
    </isoform>
    <isoform>
        <id>Q99P30-2</id>
        <name>2</name>
        <name>Beta</name>
        <name>Nudt7beta</name>
        <name evidence="10">Nudt7gamma</name>
        <sequence type="described" ref="VSP_014272"/>
    </isoform>
    <isoform>
        <id>Q99P30-3</id>
        <name>3</name>
        <sequence type="described" ref="VSP_014273"/>
    </isoform>
    <isoform>
        <id>Q99P30-4</id>
        <name>4</name>
        <sequence type="described" ref="VSP_014271"/>
    </isoform>
    <isoform>
        <id>Q99P30-5</id>
        <name>5</name>
        <sequence type="described" ref="VSP_014274 VSP_014275"/>
    </isoform>
</comment>
<comment type="tissue specificity">
    <molecule>Isoform 1</molecule>
    <text evidence="2 3 5">Highly expressed in liver, brown adipose tissue and heart. Expressed at intermediate level in lung and kidney and at low level in brain.</text>
</comment>
<comment type="tissue specificity">
    <molecule>Isoform 2</molecule>
    <text evidence="3">Expressed in liver, brown adipose tissue and heart at 20 times lower levels than isoform 1.</text>
</comment>
<comment type="induction">
    <molecule>Isoform 1</molecule>
    <text evidence="3">Expression decreases in response to peroxisome proliferators.</text>
</comment>
<comment type="miscellaneous">
    <molecule>Isoform 2</molecule>
    <text evidence="11">Inactive.</text>
</comment>
<comment type="similarity">
    <text evidence="11">Belongs to the Nudix hydrolase family. PCD1 subfamily.</text>
</comment>
<comment type="sequence caution" evidence="11">
    <conflict type="erroneous initiation">
        <sequence resource="EMBL-CDS" id="AAH33046"/>
    </conflict>
    <text>Truncated N-terminus.</text>
</comment>
<gene>
    <name evidence="15" type="primary">Nudt7</name>
</gene>
<protein>
    <recommendedName>
        <fullName>Peroxisomal coenzyme A diphosphatase NUDT7</fullName>
        <ecNumber>3.6.1.-</ecNumber>
        <ecNumber evidence="3 5">3.6.1.77</ecNumber>
    </recommendedName>
    <alternativeName>
        <fullName>Nucleoside diphosphate-linked moiety X motif 7</fullName>
        <shortName>Nudix motif 7</shortName>
    </alternativeName>
</protein>
<sequence>MSRPCGLPEPVRNNLIDDAKARLRKSDVGTRYSHLSSNKFSVLVPLLARGGKLYLMFTVRSDKLKREPGEVCFPGGKRDPVDTDDTATALREAQEEVGLHPHQVEVVSHLVPYVFDNDALVTPVVGFLDHNFQAQPNADEVKEVFFVPLDYFLHPQVYYQKQITQSGRDFIMHCFEYKDPETGVNYLIQGMTSKLAVLVALIILEQSPAFKIDFDLHDLIPSCERTFLWRYSLSKL</sequence>
<name>NUDT7_MOUSE</name>